<comment type="function">
    <text evidence="1">Isomerase that catalyzes the conversion of deoxy-ribose 1-phosphate (dRib-1-P) and ribose 1-phosphate (Rib-1-P) to deoxy-ribose 5-phosphate (dRib-5-P) and ribose 5-phosphate (Rib-5-P), respectively.</text>
</comment>
<comment type="catalytic activity">
    <reaction evidence="1">
        <text>2-deoxy-alpha-D-ribose 1-phosphate = 2-deoxy-D-ribose 5-phosphate</text>
        <dbReference type="Rhea" id="RHEA:27658"/>
        <dbReference type="ChEBI" id="CHEBI:57259"/>
        <dbReference type="ChEBI" id="CHEBI:62877"/>
        <dbReference type="EC" id="5.4.2.7"/>
    </reaction>
</comment>
<comment type="catalytic activity">
    <reaction evidence="1">
        <text>alpha-D-ribose 1-phosphate = D-ribose 5-phosphate</text>
        <dbReference type="Rhea" id="RHEA:18793"/>
        <dbReference type="ChEBI" id="CHEBI:57720"/>
        <dbReference type="ChEBI" id="CHEBI:78346"/>
        <dbReference type="EC" id="5.4.2.7"/>
    </reaction>
</comment>
<comment type="cofactor">
    <cofactor evidence="1">
        <name>Mn(2+)</name>
        <dbReference type="ChEBI" id="CHEBI:29035"/>
    </cofactor>
    <text evidence="1">Binds 2 manganese ions.</text>
</comment>
<comment type="pathway">
    <text evidence="1">Carbohydrate degradation; 2-deoxy-D-ribose 1-phosphate degradation; D-glyceraldehyde 3-phosphate and acetaldehyde from 2-deoxy-alpha-D-ribose 1-phosphate: step 1/2.</text>
</comment>
<comment type="subcellular location">
    <subcellularLocation>
        <location evidence="1">Cytoplasm</location>
    </subcellularLocation>
</comment>
<comment type="similarity">
    <text evidence="1">Belongs to the phosphopentomutase family.</text>
</comment>
<protein>
    <recommendedName>
        <fullName evidence="1">Phosphopentomutase</fullName>
        <ecNumber evidence="1">5.4.2.7</ecNumber>
    </recommendedName>
    <alternativeName>
        <fullName evidence="1">Phosphodeoxyribomutase</fullName>
    </alternativeName>
</protein>
<evidence type="ECO:0000255" key="1">
    <source>
        <dbReference type="HAMAP-Rule" id="MF_00740"/>
    </source>
</evidence>
<proteinExistence type="inferred from homology"/>
<accession>B8ZNH9</accession>
<feature type="chain" id="PRO_1000148254" description="Phosphopentomutase">
    <location>
        <begin position="1"/>
        <end position="403"/>
    </location>
</feature>
<feature type="binding site" evidence="1">
    <location>
        <position position="13"/>
    </location>
    <ligand>
        <name>Mn(2+)</name>
        <dbReference type="ChEBI" id="CHEBI:29035"/>
        <label>1</label>
    </ligand>
</feature>
<feature type="binding site" evidence="1">
    <location>
        <position position="298"/>
    </location>
    <ligand>
        <name>Mn(2+)</name>
        <dbReference type="ChEBI" id="CHEBI:29035"/>
        <label>2</label>
    </ligand>
</feature>
<feature type="binding site" evidence="1">
    <location>
        <position position="303"/>
    </location>
    <ligand>
        <name>Mn(2+)</name>
        <dbReference type="ChEBI" id="CHEBI:29035"/>
        <label>2</label>
    </ligand>
</feature>
<feature type="binding site" evidence="1">
    <location>
        <position position="339"/>
    </location>
    <ligand>
        <name>Mn(2+)</name>
        <dbReference type="ChEBI" id="CHEBI:29035"/>
        <label>1</label>
    </ligand>
</feature>
<feature type="binding site" evidence="1">
    <location>
        <position position="340"/>
    </location>
    <ligand>
        <name>Mn(2+)</name>
        <dbReference type="ChEBI" id="CHEBI:29035"/>
        <label>1</label>
    </ligand>
</feature>
<feature type="binding site" evidence="1">
    <location>
        <position position="351"/>
    </location>
    <ligand>
        <name>Mn(2+)</name>
        <dbReference type="ChEBI" id="CHEBI:29035"/>
        <label>2</label>
    </ligand>
</feature>
<gene>
    <name evidence="1" type="primary">deoB</name>
    <name type="ordered locus">SPN23F07500</name>
</gene>
<organism>
    <name type="scientific">Streptococcus pneumoniae (strain ATCC 700669 / Spain 23F-1)</name>
    <dbReference type="NCBI Taxonomy" id="561276"/>
    <lineage>
        <taxon>Bacteria</taxon>
        <taxon>Bacillati</taxon>
        <taxon>Bacillota</taxon>
        <taxon>Bacilli</taxon>
        <taxon>Lactobacillales</taxon>
        <taxon>Streptococcaceae</taxon>
        <taxon>Streptococcus</taxon>
    </lineage>
</organism>
<reference key="1">
    <citation type="journal article" date="2009" name="J. Bacteriol.">
        <title>Role of conjugative elements in the evolution of the multidrug-resistant pandemic clone Streptococcus pneumoniae Spain23F ST81.</title>
        <authorList>
            <person name="Croucher N.J."/>
            <person name="Walker D."/>
            <person name="Romero P."/>
            <person name="Lennard N."/>
            <person name="Paterson G.K."/>
            <person name="Bason N.C."/>
            <person name="Mitchell A.M."/>
            <person name="Quail M.A."/>
            <person name="Andrew P.W."/>
            <person name="Parkhill J."/>
            <person name="Bentley S.D."/>
            <person name="Mitchell T.J."/>
        </authorList>
    </citation>
    <scope>NUCLEOTIDE SEQUENCE [LARGE SCALE GENOMIC DNA]</scope>
    <source>
        <strain>ATCC 700669 / Spain 23F-1</strain>
    </source>
</reference>
<dbReference type="EC" id="5.4.2.7" evidence="1"/>
<dbReference type="EMBL" id="FM211187">
    <property type="protein sequence ID" value="CAR68593.1"/>
    <property type="molecule type" value="Genomic_DNA"/>
</dbReference>
<dbReference type="RefSeq" id="WP_000033102.1">
    <property type="nucleotide sequence ID" value="NC_011900.1"/>
</dbReference>
<dbReference type="SMR" id="B8ZNH9"/>
<dbReference type="KEGG" id="sne:SPN23F07500"/>
<dbReference type="HOGENOM" id="CLU_053861_0_0_9"/>
<dbReference type="UniPathway" id="UPA00002">
    <property type="reaction ID" value="UER00467"/>
</dbReference>
<dbReference type="GO" id="GO:0005829">
    <property type="term" value="C:cytosol"/>
    <property type="evidence" value="ECO:0007669"/>
    <property type="project" value="TreeGrafter"/>
</dbReference>
<dbReference type="GO" id="GO:0000287">
    <property type="term" value="F:magnesium ion binding"/>
    <property type="evidence" value="ECO:0007669"/>
    <property type="project" value="InterPro"/>
</dbReference>
<dbReference type="GO" id="GO:0030145">
    <property type="term" value="F:manganese ion binding"/>
    <property type="evidence" value="ECO:0007669"/>
    <property type="project" value="UniProtKB-UniRule"/>
</dbReference>
<dbReference type="GO" id="GO:0008973">
    <property type="term" value="F:phosphopentomutase activity"/>
    <property type="evidence" value="ECO:0007669"/>
    <property type="project" value="UniProtKB-UniRule"/>
</dbReference>
<dbReference type="GO" id="GO:0006018">
    <property type="term" value="P:2-deoxyribose 1-phosphate catabolic process"/>
    <property type="evidence" value="ECO:0007669"/>
    <property type="project" value="UniProtKB-UniRule"/>
</dbReference>
<dbReference type="GO" id="GO:0006015">
    <property type="term" value="P:5-phosphoribose 1-diphosphate biosynthetic process"/>
    <property type="evidence" value="ECO:0007669"/>
    <property type="project" value="UniProtKB-UniPathway"/>
</dbReference>
<dbReference type="GO" id="GO:0043094">
    <property type="term" value="P:metabolic compound salvage"/>
    <property type="evidence" value="ECO:0007669"/>
    <property type="project" value="InterPro"/>
</dbReference>
<dbReference type="GO" id="GO:0009117">
    <property type="term" value="P:nucleotide metabolic process"/>
    <property type="evidence" value="ECO:0007669"/>
    <property type="project" value="InterPro"/>
</dbReference>
<dbReference type="CDD" id="cd16009">
    <property type="entry name" value="PPM"/>
    <property type="match status" value="1"/>
</dbReference>
<dbReference type="FunFam" id="3.30.70.1250:FF:000001">
    <property type="entry name" value="Phosphopentomutase"/>
    <property type="match status" value="1"/>
</dbReference>
<dbReference type="Gene3D" id="3.40.720.10">
    <property type="entry name" value="Alkaline Phosphatase, subunit A"/>
    <property type="match status" value="1"/>
</dbReference>
<dbReference type="Gene3D" id="3.30.70.1250">
    <property type="entry name" value="Phosphopentomutase"/>
    <property type="match status" value="1"/>
</dbReference>
<dbReference type="HAMAP" id="MF_00740">
    <property type="entry name" value="Phosphopentomut"/>
    <property type="match status" value="1"/>
</dbReference>
<dbReference type="InterPro" id="IPR017850">
    <property type="entry name" value="Alkaline_phosphatase_core_sf"/>
</dbReference>
<dbReference type="InterPro" id="IPR010045">
    <property type="entry name" value="DeoB"/>
</dbReference>
<dbReference type="InterPro" id="IPR006124">
    <property type="entry name" value="Metalloenzyme"/>
</dbReference>
<dbReference type="InterPro" id="IPR024052">
    <property type="entry name" value="Phosphopentomutase_DeoB_cap_sf"/>
</dbReference>
<dbReference type="NCBIfam" id="TIGR01696">
    <property type="entry name" value="deoB"/>
    <property type="match status" value="1"/>
</dbReference>
<dbReference type="NCBIfam" id="NF003766">
    <property type="entry name" value="PRK05362.1"/>
    <property type="match status" value="1"/>
</dbReference>
<dbReference type="PANTHER" id="PTHR21110">
    <property type="entry name" value="PHOSPHOPENTOMUTASE"/>
    <property type="match status" value="1"/>
</dbReference>
<dbReference type="PANTHER" id="PTHR21110:SF0">
    <property type="entry name" value="PHOSPHOPENTOMUTASE"/>
    <property type="match status" value="1"/>
</dbReference>
<dbReference type="Pfam" id="PF01676">
    <property type="entry name" value="Metalloenzyme"/>
    <property type="match status" value="1"/>
</dbReference>
<dbReference type="PIRSF" id="PIRSF001491">
    <property type="entry name" value="Ppentomutase"/>
    <property type="match status" value="1"/>
</dbReference>
<dbReference type="SUPFAM" id="SSF53649">
    <property type="entry name" value="Alkaline phosphatase-like"/>
    <property type="match status" value="1"/>
</dbReference>
<dbReference type="SUPFAM" id="SSF143856">
    <property type="entry name" value="DeoB insert domain-like"/>
    <property type="match status" value="1"/>
</dbReference>
<keyword id="KW-0963">Cytoplasm</keyword>
<keyword id="KW-0413">Isomerase</keyword>
<keyword id="KW-0464">Manganese</keyword>
<keyword id="KW-0479">Metal-binding</keyword>
<name>DEOB_STRPJ</name>
<sequence>MSKFNRIHLVVLDSVGIGAAPDANNFVNAGVPDGASDTLGHISKTVGLNVPNMAKIGLGNIPRETPLKTVAAESNPTGYATKLEEVSLGKDTMTGHWEIMGLNITEPFDTFWNGFPEEILTKIEEFSGRKVIREANKPYSGTAVIDDFGPRQMETGELIIYTSADPVLQIAAHEDIIPLDELYRICEYARSITLERPALLGRIIARPYVGEPGNFTRTANRRDLAVSPFSPTVLDKLNEAGIDTYAVGKINDIFNGAGINHDMGHNKSNSHGIDTLLKTMGLAEFEKGFSFTNLVDFDALYGHRRNAHGYRDCLHEFDERLPEIIAAMRENDLLLITADHGNDPTYAGTDHTREYIPLLAYSPAFKGNGLIPVGHFADISATVADNFGVETAMIGESFLDKLV</sequence>